<protein>
    <recommendedName>
        <fullName evidence="6">Sarcoplasmic calcium-binding protein, alpha chain</fullName>
        <shortName evidence="6">SCP alpha chain</shortName>
    </recommendedName>
    <alternativeName>
        <fullName evidence="7 8">Allergen Lit v 4</fullName>
    </alternativeName>
    <allergenName evidence="6">Lit v 4.0101</allergenName>
</protein>
<accession>C7A639</accession>
<comment type="function">
    <text evidence="9">Like parvalbumins, SCPs seem to be more abundant in fast contracting muscles, but no functional relationship can be established from this distribution.</text>
</comment>
<comment type="subunit">
    <text evidence="9">SCPs from crayfish, lobster, and shrimp are polymorphic dimers; three isotypes (alpha-alpha, alpha-beta, and beta-beta) have been identified.</text>
</comment>
<comment type="tissue specificity">
    <text evidence="3">Expressed in tail muscle (at protein level).</text>
</comment>
<comment type="allergen">
    <text evidence="3 4 5">Causes an allergic reaction in human. Binds to IgE of patients allergic to shrimp (PubMed:19523674, PubMed:20471069, PubMed:22192087). Natural boiled protein binds to IgE in 59.6% of the 52 shrimp-allergic patients tested. Recombinant protein binds to IgE in 64.5% of the 31 patients tested allergic to the natural protein. 85% of the patients binding the recombinant protein are children (PubMed:19523674). Epitope diversity and the frequency and intensity of IgE-binding is significantly more pronounced in children than in adults (PubMed:20471069). Patients (children or adults) with positive double-blind placebo-controlled food challenge (DBPCFC) to shrimp have a more frequent, intense and diverse recognition of the epitopes of this protein than those with negative challenge (PubMed:22192087). Recombinant protein activates rat basophilic leukemia (RBL) cells expressing human immunoglobulin epsilon Fc receptor type 1 and releases beta-hexosaminidase from the cells (PubMed:19523674).</text>
</comment>
<comment type="miscellaneous">
    <text evidence="9">The sarcoplasmic calcium-binding proteins are abundant in the muscle of arthropods, mollusks, annelids, and protochordates.</text>
</comment>
<proteinExistence type="evidence at protein level"/>
<dbReference type="EMBL" id="FJ184279">
    <property type="protein sequence ID" value="ACM89179.1"/>
    <property type="molecule type" value="mRNA"/>
</dbReference>
<dbReference type="RefSeq" id="XP_069985884.1">
    <property type="nucleotide sequence ID" value="XM_070129783.1"/>
</dbReference>
<dbReference type="SMR" id="C7A639"/>
<dbReference type="Allergome" id="6092">
    <property type="allergen name" value="Lit v 4"/>
</dbReference>
<dbReference type="Allergome" id="6093">
    <property type="allergen name" value="Lit v 4.0101"/>
</dbReference>
<dbReference type="EnsemblMetazoa" id="XM_027366660.1">
    <property type="protein sequence ID" value="XP_027222461.1"/>
    <property type="gene ID" value="LOC113814611"/>
</dbReference>
<dbReference type="GeneID" id="113814611"/>
<dbReference type="OrthoDB" id="10038259at2759"/>
<dbReference type="GO" id="GO:0005509">
    <property type="term" value="F:calcium ion binding"/>
    <property type="evidence" value="ECO:0007669"/>
    <property type="project" value="InterPro"/>
</dbReference>
<dbReference type="Gene3D" id="1.10.238.10">
    <property type="entry name" value="EF-hand"/>
    <property type="match status" value="1"/>
</dbReference>
<dbReference type="InterPro" id="IPR011992">
    <property type="entry name" value="EF-hand-dom_pair"/>
</dbReference>
<dbReference type="InterPro" id="IPR018247">
    <property type="entry name" value="EF_Hand_1_Ca_BS"/>
</dbReference>
<dbReference type="InterPro" id="IPR002048">
    <property type="entry name" value="EF_hand_dom"/>
</dbReference>
<dbReference type="Pfam" id="PF13202">
    <property type="entry name" value="EF-hand_5"/>
    <property type="match status" value="1"/>
</dbReference>
<dbReference type="Pfam" id="PF13499">
    <property type="entry name" value="EF-hand_7"/>
    <property type="match status" value="1"/>
</dbReference>
<dbReference type="SMART" id="SM00054">
    <property type="entry name" value="EFh"/>
    <property type="match status" value="2"/>
</dbReference>
<dbReference type="SUPFAM" id="SSF47473">
    <property type="entry name" value="EF-hand"/>
    <property type="match status" value="1"/>
</dbReference>
<dbReference type="PROSITE" id="PS00018">
    <property type="entry name" value="EF_HAND_1"/>
    <property type="match status" value="3"/>
</dbReference>
<dbReference type="PROSITE" id="PS50222">
    <property type="entry name" value="EF_HAND_2"/>
    <property type="match status" value="3"/>
</dbReference>
<name>SCPA_PENVA</name>
<sequence length="193" mass="22078">MAYSWDNRVKYVVRYMYDIDNNGFLDKNDFECLAVRNTLIEGRGEFSADAYANNQKIMRNLWNEIAELADFNKDGEVTVDEFKQAVQKHCQGKKYGDFPGAFKVFIANQFKAIDVNGDGKVGLDEYRLDCITRSAFAEVKEIDDAYNKLTTEDDRKAGGLTLERYQDLYAQFISNPDESCSACYLFGPLKVVQ</sequence>
<organism evidence="10">
    <name type="scientific">Penaeus vannamei</name>
    <name type="common">Whiteleg shrimp</name>
    <name type="synonym">Litopenaeus vannamei</name>
    <dbReference type="NCBI Taxonomy" id="6689"/>
    <lineage>
        <taxon>Eukaryota</taxon>
        <taxon>Metazoa</taxon>
        <taxon>Ecdysozoa</taxon>
        <taxon>Arthropoda</taxon>
        <taxon>Crustacea</taxon>
        <taxon>Multicrustacea</taxon>
        <taxon>Malacostraca</taxon>
        <taxon>Eumalacostraca</taxon>
        <taxon>Eucarida</taxon>
        <taxon>Decapoda</taxon>
        <taxon>Dendrobranchiata</taxon>
        <taxon>Penaeoidea</taxon>
        <taxon>Penaeidae</taxon>
        <taxon>Penaeus</taxon>
    </lineage>
</organism>
<evidence type="ECO:0000255" key="1">
    <source>
        <dbReference type="PROSITE-ProRule" id="PRU00448"/>
    </source>
</evidence>
<evidence type="ECO:0000255" key="2">
    <source>
        <dbReference type="PROSITE-ProRule" id="PRU10142"/>
    </source>
</evidence>
<evidence type="ECO:0000269" key="3">
    <source>
    </source>
</evidence>
<evidence type="ECO:0000269" key="4">
    <source>
    </source>
</evidence>
<evidence type="ECO:0000269" key="5">
    <source>
    </source>
</evidence>
<evidence type="ECO:0000303" key="6">
    <source>
    </source>
</evidence>
<evidence type="ECO:0000303" key="7">
    <source>
    </source>
</evidence>
<evidence type="ECO:0000303" key="8">
    <source>
    </source>
</evidence>
<evidence type="ECO:0000305" key="9"/>
<evidence type="ECO:0000312" key="10">
    <source>
        <dbReference type="EMBL" id="ACM89179.1"/>
    </source>
</evidence>
<feature type="chain" id="PRO_0000456252" description="Sarcoplasmic calcium-binding protein, alpha chain">
    <location>
        <begin position="1"/>
        <end position="193"/>
    </location>
</feature>
<feature type="domain" description="EF-hand 1" evidence="1">
    <location>
        <begin position="16"/>
        <end position="40"/>
    </location>
</feature>
<feature type="domain" description="EF-hand 2" evidence="1">
    <location>
        <begin position="57"/>
        <end position="92"/>
    </location>
</feature>
<feature type="domain" description="EF-hand 3" evidence="1">
    <location>
        <begin position="101"/>
        <end position="136"/>
    </location>
</feature>
<feature type="region of interest" description="IgE-binding epitope" evidence="4 5">
    <location>
        <begin position="10"/>
        <end position="36"/>
    </location>
</feature>
<feature type="region of interest" description="IgE-binding epitope" evidence="4 5">
    <location>
        <begin position="49"/>
        <end position="72"/>
    </location>
</feature>
<feature type="region of interest" description="IgE-binding epitope" evidence="4 5">
    <location>
        <begin position="130"/>
        <end position="147"/>
    </location>
</feature>
<feature type="binding site" evidence="1 2">
    <location>
        <position position="18"/>
    </location>
    <ligand>
        <name>Ca(2+)</name>
        <dbReference type="ChEBI" id="CHEBI:29108"/>
        <label>1</label>
    </ligand>
</feature>
<feature type="binding site" evidence="1 2">
    <location>
        <position position="20"/>
    </location>
    <ligand>
        <name>Ca(2+)</name>
        <dbReference type="ChEBI" id="CHEBI:29108"/>
        <label>1</label>
    </ligand>
</feature>
<feature type="binding site" evidence="1 2">
    <location>
        <position position="22"/>
    </location>
    <ligand>
        <name>Ca(2+)</name>
        <dbReference type="ChEBI" id="CHEBI:29108"/>
        <label>1</label>
    </ligand>
</feature>
<feature type="binding site" evidence="1 2">
    <location>
        <position position="29"/>
    </location>
    <ligand>
        <name>Ca(2+)</name>
        <dbReference type="ChEBI" id="CHEBI:29108"/>
        <label>1</label>
    </ligand>
</feature>
<feature type="binding site" evidence="1 2">
    <location>
        <position position="70"/>
    </location>
    <ligand>
        <name>Ca(2+)</name>
        <dbReference type="ChEBI" id="CHEBI:29108"/>
        <label>2</label>
    </ligand>
</feature>
<feature type="binding site" evidence="1 2">
    <location>
        <position position="72"/>
    </location>
    <ligand>
        <name>Ca(2+)</name>
        <dbReference type="ChEBI" id="CHEBI:29108"/>
        <label>2</label>
    </ligand>
</feature>
<feature type="binding site" evidence="1 2">
    <location>
        <position position="74"/>
    </location>
    <ligand>
        <name>Ca(2+)</name>
        <dbReference type="ChEBI" id="CHEBI:29108"/>
        <label>2</label>
    </ligand>
</feature>
<feature type="binding site" evidence="1 2">
    <location>
        <position position="76"/>
    </location>
    <ligand>
        <name>Ca(2+)</name>
        <dbReference type="ChEBI" id="CHEBI:29108"/>
        <label>2</label>
    </ligand>
</feature>
<feature type="binding site" evidence="1 2">
    <location>
        <position position="81"/>
    </location>
    <ligand>
        <name>Ca(2+)</name>
        <dbReference type="ChEBI" id="CHEBI:29108"/>
        <label>2</label>
    </ligand>
</feature>
<feature type="binding site" evidence="1 2">
    <location>
        <position position="114"/>
    </location>
    <ligand>
        <name>Ca(2+)</name>
        <dbReference type="ChEBI" id="CHEBI:29108"/>
        <label>3</label>
    </ligand>
</feature>
<feature type="binding site" evidence="1 2">
    <location>
        <position position="116"/>
    </location>
    <ligand>
        <name>Ca(2+)</name>
        <dbReference type="ChEBI" id="CHEBI:29108"/>
        <label>3</label>
    </ligand>
</feature>
<feature type="binding site" evidence="1 2">
    <location>
        <position position="118"/>
    </location>
    <ligand>
        <name>Ca(2+)</name>
        <dbReference type="ChEBI" id="CHEBI:29108"/>
        <label>3</label>
    </ligand>
</feature>
<feature type="binding site" evidence="1 2">
    <location>
        <position position="120"/>
    </location>
    <ligand>
        <name>Ca(2+)</name>
        <dbReference type="ChEBI" id="CHEBI:29108"/>
        <label>3</label>
    </ligand>
</feature>
<feature type="binding site" evidence="1 2">
    <location>
        <position position="125"/>
    </location>
    <ligand>
        <name>Ca(2+)</name>
        <dbReference type="ChEBI" id="CHEBI:29108"/>
        <label>3</label>
    </ligand>
</feature>
<reference evidence="10" key="1">
    <citation type="journal article" date="2009" name="J. Allergy Clin. Immunol.">
        <title>Sarcoplasmic calcium-binding protein is an EF-hand-type protein identified as a new shrimp allergen.</title>
        <authorList>
            <person name="Ayuso R."/>
            <person name="Grishina G."/>
            <person name="Ibanez M.D."/>
            <person name="Blanco C."/>
            <person name="Carrillo T."/>
            <person name="Bencharitiwong R."/>
            <person name="Sanchez S."/>
            <person name="Nowak-Wegrzyn A."/>
            <person name="Sampson H.A."/>
        </authorList>
    </citation>
    <scope>NUCLEOTIDE SEQUENCE [MRNA]</scope>
    <scope>TISSUE SPECIFICITY</scope>
    <scope>IDENTIFICATION BY MASS SPECTROMETRY</scope>
    <scope>ALLERGEN</scope>
</reference>
<reference key="2">
    <citation type="journal article" date="2010" name="J. Allergy Clin. Immunol.">
        <title>Greater epitope recognition of shrimp allergens by children than by adults suggests that shrimp sensitization decreases with age.</title>
        <authorList>
            <person name="Ayuso R."/>
            <person name="Sanchez-Garcia S."/>
            <person name="Lin J."/>
            <person name="Fu Z."/>
            <person name="Ibanez M.D."/>
            <person name="Carrillo T."/>
            <person name="Blanco C."/>
            <person name="Goldis M."/>
            <person name="Bardina L."/>
            <person name="Sastre J."/>
            <person name="Sampson H.A."/>
        </authorList>
    </citation>
    <scope>ALLERGEN</scope>
    <scope>REGIONS</scope>
</reference>
<reference key="3">
    <citation type="journal article" date="2012" name="Clin. Exp. Allergy">
        <title>Is epitope recognition of shrimp allergens useful to predict clinical reactivity?</title>
        <authorList>
            <person name="Ayuso R."/>
            <person name="Sanchez-Garcia S."/>
            <person name="Pascal M."/>
            <person name="Lin J."/>
            <person name="Grishina G."/>
            <person name="Fu Z."/>
            <person name="Ibanez M.D."/>
            <person name="Sastre J."/>
            <person name="Sampson H.A."/>
        </authorList>
    </citation>
    <scope>ALLERGEN</scope>
    <scope>REGIONS</scope>
</reference>
<keyword id="KW-0020">Allergen</keyword>
<keyword id="KW-0106">Calcium</keyword>
<keyword id="KW-0479">Metal-binding</keyword>
<keyword id="KW-0514">Muscle protein</keyword>
<keyword id="KW-0677">Repeat</keyword>